<feature type="signal peptide">
    <location>
        <begin position="1"/>
        <end position="25"/>
    </location>
</feature>
<feature type="chain" id="PRO_0000009103" description="Fibrinogen gamma chain">
    <location>
        <begin position="26"/>
        <end position="438"/>
    </location>
</feature>
<feature type="domain" description="Fibrinogen C-terminal" evidence="5">
    <location>
        <begin position="167"/>
        <end position="414"/>
    </location>
</feature>
<feature type="binding site" evidence="3">
    <location>
        <position position="341"/>
    </location>
    <ligand>
        <name>Ca(2+)</name>
        <dbReference type="ChEBI" id="CHEBI:29108"/>
    </ligand>
</feature>
<feature type="binding site" evidence="3">
    <location>
        <position position="343"/>
    </location>
    <ligand>
        <name>Ca(2+)</name>
        <dbReference type="ChEBI" id="CHEBI:29108"/>
    </ligand>
</feature>
<feature type="binding site" evidence="3">
    <location>
        <position position="347"/>
    </location>
    <ligand>
        <name>Ca(2+)</name>
        <dbReference type="ChEBI" id="CHEBI:29108"/>
    </ligand>
</feature>
<feature type="glycosylation site" description="N-linked (GlcNAc...) asparagine" evidence="4">
    <location>
        <position position="76"/>
    </location>
</feature>
<feature type="disulfide bond" description="Interchain (with C-33)" evidence="5">
    <location>
        <position position="32"/>
    </location>
</feature>
<feature type="disulfide bond" description="Interchain (with C-32)" evidence="5">
    <location>
        <position position="33"/>
    </location>
</feature>
<feature type="disulfide bond" description="Interchain (with beta chain)" evidence="5">
    <location>
        <position position="43"/>
    </location>
</feature>
<feature type="disulfide bond" description="Interchain (with alpha chain)" evidence="5">
    <location>
        <position position="47"/>
    </location>
</feature>
<feature type="disulfide bond" description="Interchain (with beta chain)" evidence="5">
    <location>
        <position position="158"/>
    </location>
</feature>
<feature type="disulfide bond" description="Interchain (with alpha chain)" evidence="5">
    <location>
        <position position="162"/>
    </location>
</feature>
<feature type="disulfide bond" evidence="5">
    <location>
        <begin position="176"/>
        <end position="205"/>
    </location>
</feature>
<feature type="disulfide bond" evidence="5">
    <location>
        <begin position="349"/>
        <end position="362"/>
    </location>
</feature>
<comment type="function">
    <text evidence="1">Together with fibrinogen alpha (FGA) and fibrinogen beta (FGB), polymerizes to form an insoluble fibrin matrix. Has a major function in hemostasis as one of the primary components of blood clots.</text>
</comment>
<comment type="subunit">
    <text evidence="2">Heterohexamer; disulfide linked. Contains 2 sets of 3 non-identical chains (alpha, beta and gamma). The 2 heterotrimers are in head to head conformation with the N-termini in a small central domain (By similarity).</text>
</comment>
<comment type="subcellular location">
    <subcellularLocation>
        <location evidence="2">Secreted</location>
    </subcellularLocation>
</comment>
<comment type="domain">
    <text evidence="2">A long coiled coil structure formed by 3 polypeptide chains connects the central nodule to the C-terminal domains (distal nodules). The long C-terminal ends of the alpha chains fold back, contributing a fourth strand to the coiled coil structure.</text>
</comment>
<comment type="PTM">
    <text>Conversion of fibrinogen to fibrin is triggered by thrombin, which cleaves fibrinopeptides A and B from alpha and beta chains, and thus exposes the N-terminal polymerization sites responsible for the formation of the soft clot. The soft clot is converted into the hard clot by factor XIIIA which catalyzes the epsilon-(gamma-glutamyl)lysine cross-linking between gamma chains (stronger) and between alpha chains (weaker) of different monomers.</text>
</comment>
<sequence>MTRLPKQGLLLLQSLALLSSAFGNIIPNTDNCCILDGRFGEYCPTTCGISDFLNRYQENVDTDLQYLENLLTQISNSTSGTTIIVEHLIDSGKKPATSPQTAIDPMTQKSKTCWMKLTDMKNYYQYEENILYLQEVYSSNQNKIFLLKQKIANLELQCQQPCRDTVQIQEFTGKDCQEVANKGARLSGLYYIKPLKAKQQFLVYCEIEPSGSAWTVIQRRLDGSVNFHKNWVQYREGFGYLSPNDKTEFWLGNEKIHLLSTQSTIPYVMRIELEDWSNQKSTADYSTFRLGSEKDNYRFTYAYFIGGDAGDAFDGFDFGDDPSDKFYTSHNGMQFSTFDKDNDKFDGNCAEQDGSGWWMNRCHAAHLNGKYYQGGTYSEADSGPSGYDNGIIWATWRRRWYSMKSVTMKIMPLNRYGAEGQQTLGGSKKSDFENRGDF</sequence>
<protein>
    <recommendedName>
        <fullName>Fibrinogen gamma chain</fullName>
    </recommendedName>
</protein>
<name>FIBG_XENLA</name>
<proteinExistence type="evidence at transcript level"/>
<dbReference type="EMBL" id="J02894">
    <property type="protein sequence ID" value="AAA49709.1"/>
    <property type="molecule type" value="mRNA"/>
</dbReference>
<dbReference type="EMBL" id="M35548">
    <property type="protein sequence ID" value="AAA03247.1"/>
    <property type="molecule type" value="mRNA"/>
</dbReference>
<dbReference type="PIR" id="A32670">
    <property type="entry name" value="A32670"/>
</dbReference>
<dbReference type="SMR" id="P17634"/>
<dbReference type="GlyCosmos" id="P17634">
    <property type="glycosylation" value="1 site, No reported glycans"/>
</dbReference>
<dbReference type="AGR" id="Xenbase:XB-GENE-478359"/>
<dbReference type="Xenbase" id="XB-GENE-478359">
    <property type="gene designation" value="fgg.L"/>
</dbReference>
<dbReference type="Proteomes" id="UP000186698">
    <property type="component" value="Unplaced"/>
</dbReference>
<dbReference type="GO" id="GO:0005577">
    <property type="term" value="C:fibrinogen complex"/>
    <property type="evidence" value="ECO:0000318"/>
    <property type="project" value="GO_Central"/>
</dbReference>
<dbReference type="GO" id="GO:0005201">
    <property type="term" value="F:extracellular matrix structural constituent"/>
    <property type="evidence" value="ECO:0007669"/>
    <property type="project" value="TreeGrafter"/>
</dbReference>
<dbReference type="GO" id="GO:0046872">
    <property type="term" value="F:metal ion binding"/>
    <property type="evidence" value="ECO:0007669"/>
    <property type="project" value="UniProtKB-KW"/>
</dbReference>
<dbReference type="GO" id="GO:0030674">
    <property type="term" value="F:protein-macromolecule adaptor activity"/>
    <property type="evidence" value="ECO:0000318"/>
    <property type="project" value="GO_Central"/>
</dbReference>
<dbReference type="GO" id="GO:0005102">
    <property type="term" value="F:signaling receptor binding"/>
    <property type="evidence" value="ECO:0007669"/>
    <property type="project" value="InterPro"/>
</dbReference>
<dbReference type="GO" id="GO:0072377">
    <property type="term" value="P:blood coagulation, common pathway"/>
    <property type="evidence" value="ECO:0000318"/>
    <property type="project" value="GO_Central"/>
</dbReference>
<dbReference type="GO" id="GO:0042730">
    <property type="term" value="P:fibrinolysis"/>
    <property type="evidence" value="ECO:0000318"/>
    <property type="project" value="GO_Central"/>
</dbReference>
<dbReference type="GO" id="GO:0070527">
    <property type="term" value="P:platelet aggregation"/>
    <property type="evidence" value="ECO:0000318"/>
    <property type="project" value="GO_Central"/>
</dbReference>
<dbReference type="GO" id="GO:0034116">
    <property type="term" value="P:positive regulation of heterotypic cell-cell adhesion"/>
    <property type="evidence" value="ECO:0000318"/>
    <property type="project" value="GO_Central"/>
</dbReference>
<dbReference type="GO" id="GO:0051258">
    <property type="term" value="P:protein polymerization"/>
    <property type="evidence" value="ECO:0007669"/>
    <property type="project" value="InterPro"/>
</dbReference>
<dbReference type="CDD" id="cd00087">
    <property type="entry name" value="FReD"/>
    <property type="match status" value="1"/>
</dbReference>
<dbReference type="FunFam" id="1.20.5.50:FF:000003">
    <property type="entry name" value="Fibrinogen gamma chain"/>
    <property type="match status" value="1"/>
</dbReference>
<dbReference type="FunFam" id="3.90.215.10:FF:000002">
    <property type="entry name" value="Fibrinogen gamma chain"/>
    <property type="match status" value="1"/>
</dbReference>
<dbReference type="FunFam" id="4.10.530.10:FF:000002">
    <property type="entry name" value="Fibrinogen gamma chain"/>
    <property type="match status" value="1"/>
</dbReference>
<dbReference type="Gene3D" id="1.20.5.50">
    <property type="match status" value="1"/>
</dbReference>
<dbReference type="Gene3D" id="3.90.215.10">
    <property type="entry name" value="Gamma Fibrinogen, chain A, domain 1"/>
    <property type="match status" value="1"/>
</dbReference>
<dbReference type="Gene3D" id="4.10.530.10">
    <property type="entry name" value="Gamma-fibrinogen Carboxyl Terminal Fragment, domain 2"/>
    <property type="match status" value="1"/>
</dbReference>
<dbReference type="InterPro" id="IPR037579">
    <property type="entry name" value="FIB_ANG-like"/>
</dbReference>
<dbReference type="InterPro" id="IPR036056">
    <property type="entry name" value="Fibrinogen-like_C"/>
</dbReference>
<dbReference type="InterPro" id="IPR014716">
    <property type="entry name" value="Fibrinogen_a/b/g_C_1"/>
</dbReference>
<dbReference type="InterPro" id="IPR002181">
    <property type="entry name" value="Fibrinogen_a/b/g_C_dom"/>
</dbReference>
<dbReference type="InterPro" id="IPR012290">
    <property type="entry name" value="Fibrinogen_a/b/g_coil_dom"/>
</dbReference>
<dbReference type="InterPro" id="IPR020837">
    <property type="entry name" value="Fibrinogen_CS"/>
</dbReference>
<dbReference type="PANTHER" id="PTHR47221">
    <property type="entry name" value="FIBRINOGEN ALPHA CHAIN"/>
    <property type="match status" value="1"/>
</dbReference>
<dbReference type="PANTHER" id="PTHR47221:SF6">
    <property type="entry name" value="FIBRINOGEN ALPHA CHAIN"/>
    <property type="match status" value="1"/>
</dbReference>
<dbReference type="Pfam" id="PF08702">
    <property type="entry name" value="Fib_alpha"/>
    <property type="match status" value="1"/>
</dbReference>
<dbReference type="Pfam" id="PF00147">
    <property type="entry name" value="Fibrinogen_C"/>
    <property type="match status" value="1"/>
</dbReference>
<dbReference type="SMART" id="SM00186">
    <property type="entry name" value="FBG"/>
    <property type="match status" value="1"/>
</dbReference>
<dbReference type="SMART" id="SM01212">
    <property type="entry name" value="Fib_alpha"/>
    <property type="match status" value="1"/>
</dbReference>
<dbReference type="SUPFAM" id="SSF56496">
    <property type="entry name" value="Fibrinogen C-terminal domain-like"/>
    <property type="match status" value="1"/>
</dbReference>
<dbReference type="SUPFAM" id="SSF58010">
    <property type="entry name" value="Fibrinogen coiled-coil and central regions"/>
    <property type="match status" value="1"/>
</dbReference>
<dbReference type="PROSITE" id="PS00514">
    <property type="entry name" value="FIBRINOGEN_C_1"/>
    <property type="match status" value="1"/>
</dbReference>
<dbReference type="PROSITE" id="PS51406">
    <property type="entry name" value="FIBRINOGEN_C_2"/>
    <property type="match status" value="1"/>
</dbReference>
<organism>
    <name type="scientific">Xenopus laevis</name>
    <name type="common">African clawed frog</name>
    <dbReference type="NCBI Taxonomy" id="8355"/>
    <lineage>
        <taxon>Eukaryota</taxon>
        <taxon>Metazoa</taxon>
        <taxon>Chordata</taxon>
        <taxon>Craniata</taxon>
        <taxon>Vertebrata</taxon>
        <taxon>Euteleostomi</taxon>
        <taxon>Amphibia</taxon>
        <taxon>Batrachia</taxon>
        <taxon>Anura</taxon>
        <taxon>Pipoidea</taxon>
        <taxon>Pipidae</taxon>
        <taxon>Xenopodinae</taxon>
        <taxon>Xenopus</taxon>
        <taxon>Xenopus</taxon>
    </lineage>
</organism>
<keyword id="KW-0094">Blood coagulation</keyword>
<keyword id="KW-0106">Calcium</keyword>
<keyword id="KW-0175">Coiled coil</keyword>
<keyword id="KW-1015">Disulfide bond</keyword>
<keyword id="KW-0325">Glycoprotein</keyword>
<keyword id="KW-0356">Hemostasis</keyword>
<keyword id="KW-0479">Metal-binding</keyword>
<keyword id="KW-1185">Reference proteome</keyword>
<keyword id="KW-0964">Secreted</keyword>
<keyword id="KW-0732">Signal</keyword>
<reference key="1">
    <citation type="journal article" date="1990" name="Biochemistry">
        <title>Estrogen regulation of Xenopus laevis gamma-fibrinogen gene expression.</title>
        <authorList>
            <person name="Pastori R.L."/>
            <person name="Moskaitis J.E."/>
            <person name="Smith L.H. Jr."/>
            <person name="Schoenberg D.R."/>
        </authorList>
    </citation>
    <scope>NUCLEOTIDE SEQUENCE [MRNA]</scope>
</reference>
<reference key="2">
    <citation type="journal article" date="1990" name="Mol. Cell. Endocrinol.">
        <title>Isolation and characterization of cDNA clones for the gamma subunit of Xenopus fibrinogen, the product of a coordinately regulated gene family.</title>
        <authorList>
            <person name="Bhattacharya A."/>
            <person name="Shepard A.R."/>
            <person name="Moser D.R."/>
            <person name="Holland L.J."/>
        </authorList>
    </citation>
    <scope>NUCLEOTIDE SEQUENCE [MRNA] OF 1-58</scope>
    <source>
        <tissue>Liver</tissue>
    </source>
</reference>
<accession>P17634</accession>
<evidence type="ECO:0000250" key="1">
    <source>
        <dbReference type="UniProtKB" id="E9PV24"/>
    </source>
</evidence>
<evidence type="ECO:0000250" key="2">
    <source>
        <dbReference type="UniProtKB" id="P02679"/>
    </source>
</evidence>
<evidence type="ECO:0000250" key="3">
    <source>
        <dbReference type="UniProtKB" id="P04115"/>
    </source>
</evidence>
<evidence type="ECO:0000255" key="4"/>
<evidence type="ECO:0000255" key="5">
    <source>
        <dbReference type="PROSITE-ProRule" id="PRU00739"/>
    </source>
</evidence>
<gene>
    <name type="primary">fgg</name>
</gene>